<dbReference type="EC" id="2.5.1.61" evidence="1"/>
<dbReference type="EMBL" id="AE005674">
    <property type="protein sequence ID" value="AAN45314.2"/>
    <property type="molecule type" value="Genomic_DNA"/>
</dbReference>
<dbReference type="EMBL" id="AE014073">
    <property type="protein sequence ID" value="AAP18884.1"/>
    <property type="molecule type" value="Genomic_DNA"/>
</dbReference>
<dbReference type="RefSeq" id="NP_709607.2">
    <property type="nucleotide sequence ID" value="NC_004337.2"/>
</dbReference>
<dbReference type="RefSeq" id="WP_005052874.1">
    <property type="nucleotide sequence ID" value="NZ_WPGW01000140.1"/>
</dbReference>
<dbReference type="SMR" id="Q83PH4"/>
<dbReference type="STRING" id="198214.SF3877"/>
<dbReference type="PaxDb" id="198214-SF3877"/>
<dbReference type="GeneID" id="1026830"/>
<dbReference type="KEGG" id="sfl:SF3877"/>
<dbReference type="KEGG" id="sfx:S3879"/>
<dbReference type="PATRIC" id="fig|198214.7.peg.4572"/>
<dbReference type="HOGENOM" id="CLU_019704_0_2_6"/>
<dbReference type="UniPathway" id="UPA00251">
    <property type="reaction ID" value="UER00319"/>
</dbReference>
<dbReference type="Proteomes" id="UP000001006">
    <property type="component" value="Chromosome"/>
</dbReference>
<dbReference type="Proteomes" id="UP000002673">
    <property type="component" value="Chromosome"/>
</dbReference>
<dbReference type="GO" id="GO:0005737">
    <property type="term" value="C:cytoplasm"/>
    <property type="evidence" value="ECO:0007669"/>
    <property type="project" value="TreeGrafter"/>
</dbReference>
<dbReference type="GO" id="GO:0004418">
    <property type="term" value="F:hydroxymethylbilane synthase activity"/>
    <property type="evidence" value="ECO:0007669"/>
    <property type="project" value="UniProtKB-UniRule"/>
</dbReference>
<dbReference type="GO" id="GO:0006782">
    <property type="term" value="P:protoporphyrinogen IX biosynthetic process"/>
    <property type="evidence" value="ECO:0007669"/>
    <property type="project" value="UniProtKB-UniRule"/>
</dbReference>
<dbReference type="CDD" id="cd13646">
    <property type="entry name" value="PBP2_EcHMBS_like"/>
    <property type="match status" value="1"/>
</dbReference>
<dbReference type="FunFam" id="3.30.160.40:FF:000002">
    <property type="entry name" value="Porphobilinogen deaminase"/>
    <property type="match status" value="1"/>
</dbReference>
<dbReference type="FunFam" id="3.40.190.10:FF:000004">
    <property type="entry name" value="Porphobilinogen deaminase"/>
    <property type="match status" value="1"/>
</dbReference>
<dbReference type="FunFam" id="3.40.190.10:FF:000005">
    <property type="entry name" value="Porphobilinogen deaminase"/>
    <property type="match status" value="1"/>
</dbReference>
<dbReference type="Gene3D" id="3.40.190.10">
    <property type="entry name" value="Periplasmic binding protein-like II"/>
    <property type="match status" value="2"/>
</dbReference>
<dbReference type="Gene3D" id="3.30.160.40">
    <property type="entry name" value="Porphobilinogen deaminase, C-terminal domain"/>
    <property type="match status" value="1"/>
</dbReference>
<dbReference type="HAMAP" id="MF_00260">
    <property type="entry name" value="Porphobil_deam"/>
    <property type="match status" value="1"/>
</dbReference>
<dbReference type="InterPro" id="IPR000860">
    <property type="entry name" value="HemC"/>
</dbReference>
<dbReference type="InterPro" id="IPR022419">
    <property type="entry name" value="Porphobilin_deaminase_cofac_BS"/>
</dbReference>
<dbReference type="InterPro" id="IPR022417">
    <property type="entry name" value="Porphobilin_deaminase_N"/>
</dbReference>
<dbReference type="InterPro" id="IPR022418">
    <property type="entry name" value="Porphobilinogen_deaminase_C"/>
</dbReference>
<dbReference type="InterPro" id="IPR036803">
    <property type="entry name" value="Porphobilinogen_deaminase_C_sf"/>
</dbReference>
<dbReference type="NCBIfam" id="TIGR00212">
    <property type="entry name" value="hemC"/>
    <property type="match status" value="1"/>
</dbReference>
<dbReference type="PANTHER" id="PTHR11557">
    <property type="entry name" value="PORPHOBILINOGEN DEAMINASE"/>
    <property type="match status" value="1"/>
</dbReference>
<dbReference type="PANTHER" id="PTHR11557:SF0">
    <property type="entry name" value="PORPHOBILINOGEN DEAMINASE"/>
    <property type="match status" value="1"/>
</dbReference>
<dbReference type="Pfam" id="PF01379">
    <property type="entry name" value="Porphobil_deam"/>
    <property type="match status" value="1"/>
</dbReference>
<dbReference type="Pfam" id="PF03900">
    <property type="entry name" value="Porphobil_deamC"/>
    <property type="match status" value="1"/>
</dbReference>
<dbReference type="PIRSF" id="PIRSF001438">
    <property type="entry name" value="4pyrrol_synth_OHMeBilane_synth"/>
    <property type="match status" value="1"/>
</dbReference>
<dbReference type="PRINTS" id="PR00151">
    <property type="entry name" value="PORPHBDMNASE"/>
</dbReference>
<dbReference type="SUPFAM" id="SSF53850">
    <property type="entry name" value="Periplasmic binding protein-like II"/>
    <property type="match status" value="1"/>
</dbReference>
<dbReference type="SUPFAM" id="SSF54782">
    <property type="entry name" value="Porphobilinogen deaminase (hydroxymethylbilane synthase), C-terminal domain"/>
    <property type="match status" value="1"/>
</dbReference>
<dbReference type="PROSITE" id="PS00533">
    <property type="entry name" value="PORPHOBILINOGEN_DEAM"/>
    <property type="match status" value="1"/>
</dbReference>
<proteinExistence type="inferred from homology"/>
<sequence length="313" mass="33827">MLDNVLRIATRQSPLALWQAHYVKDKLMASHPGLVVELVPMVTRGDVILDTPLAKVGGKGLFVKELEVALLENRADIAVHSMKDVPVEFPQGLGLVTICEREDPRDAFVSNNYDSLDALPAGSIVGTSSLRRQCQLAERRPDLIIRSLRGNVGTRLSKLDNGEYDAIILAVAGLKRLGLESRIRAALPPEISLPAVGQGAVGIECRLDDTRTRELLAALNHHETALRVTAERAMNTRLEGGCQVPIGSYAELIDGEIWLCALVGAPDGSQIIRGERRGAPQDAEQMGISLAEELLNNGAREILAEVYNGEAPA</sequence>
<name>HEM3_SHIFL</name>
<feature type="chain" id="PRO_0000142987" description="Porphobilinogen deaminase">
    <location>
        <begin position="1"/>
        <end position="313"/>
    </location>
</feature>
<feature type="modified residue" description="S-(dipyrrolylmethanemethyl)cysteine" evidence="1">
    <location>
        <position position="242"/>
    </location>
</feature>
<gene>
    <name evidence="1" type="primary">hemC</name>
    <name type="ordered locus">SF3877</name>
    <name type="ordered locus">S3879</name>
</gene>
<keyword id="KW-0627">Porphyrin biosynthesis</keyword>
<keyword id="KW-1185">Reference proteome</keyword>
<keyword id="KW-0808">Transferase</keyword>
<protein>
    <recommendedName>
        <fullName evidence="1">Porphobilinogen deaminase</fullName>
        <shortName evidence="1">PBG</shortName>
        <ecNumber evidence="1">2.5.1.61</ecNumber>
    </recommendedName>
    <alternativeName>
        <fullName evidence="1">Hydroxymethylbilane synthase</fullName>
        <shortName evidence="1">HMBS</shortName>
    </alternativeName>
    <alternativeName>
        <fullName evidence="1">Pre-uroporphyrinogen synthase</fullName>
    </alternativeName>
</protein>
<comment type="function">
    <text evidence="1">Tetrapolymerization of the monopyrrole PBG into the hydroxymethylbilane pre-uroporphyrinogen in several discrete steps.</text>
</comment>
<comment type="catalytic activity">
    <reaction evidence="1">
        <text>4 porphobilinogen + H2O = hydroxymethylbilane + 4 NH4(+)</text>
        <dbReference type="Rhea" id="RHEA:13185"/>
        <dbReference type="ChEBI" id="CHEBI:15377"/>
        <dbReference type="ChEBI" id="CHEBI:28938"/>
        <dbReference type="ChEBI" id="CHEBI:57845"/>
        <dbReference type="ChEBI" id="CHEBI:58126"/>
        <dbReference type="EC" id="2.5.1.61"/>
    </reaction>
</comment>
<comment type="cofactor">
    <cofactor evidence="1">
        <name>dipyrromethane</name>
        <dbReference type="ChEBI" id="CHEBI:60342"/>
    </cofactor>
    <text evidence="1">Binds 1 dipyrromethane group covalently.</text>
</comment>
<comment type="pathway">
    <text evidence="1">Porphyrin-containing compound metabolism; protoporphyrin-IX biosynthesis; coproporphyrinogen-III from 5-aminolevulinate: step 2/4.</text>
</comment>
<comment type="subunit">
    <text evidence="1">Monomer.</text>
</comment>
<comment type="miscellaneous">
    <text evidence="1">The porphobilinogen subunits are added to the dipyrromethane group.</text>
</comment>
<comment type="similarity">
    <text evidence="1">Belongs to the HMBS family.</text>
</comment>
<organism>
    <name type="scientific">Shigella flexneri</name>
    <dbReference type="NCBI Taxonomy" id="623"/>
    <lineage>
        <taxon>Bacteria</taxon>
        <taxon>Pseudomonadati</taxon>
        <taxon>Pseudomonadota</taxon>
        <taxon>Gammaproteobacteria</taxon>
        <taxon>Enterobacterales</taxon>
        <taxon>Enterobacteriaceae</taxon>
        <taxon>Shigella</taxon>
    </lineage>
</organism>
<accession>Q83PH4</accession>
<accession>Q7UB42</accession>
<evidence type="ECO:0000255" key="1">
    <source>
        <dbReference type="HAMAP-Rule" id="MF_00260"/>
    </source>
</evidence>
<reference key="1">
    <citation type="journal article" date="2002" name="Nucleic Acids Res.">
        <title>Genome sequence of Shigella flexneri 2a: insights into pathogenicity through comparison with genomes of Escherichia coli K12 and O157.</title>
        <authorList>
            <person name="Jin Q."/>
            <person name="Yuan Z."/>
            <person name="Xu J."/>
            <person name="Wang Y."/>
            <person name="Shen Y."/>
            <person name="Lu W."/>
            <person name="Wang J."/>
            <person name="Liu H."/>
            <person name="Yang J."/>
            <person name="Yang F."/>
            <person name="Zhang X."/>
            <person name="Zhang J."/>
            <person name="Yang G."/>
            <person name="Wu H."/>
            <person name="Qu D."/>
            <person name="Dong J."/>
            <person name="Sun L."/>
            <person name="Xue Y."/>
            <person name="Zhao A."/>
            <person name="Gao Y."/>
            <person name="Zhu J."/>
            <person name="Kan B."/>
            <person name="Ding K."/>
            <person name="Chen S."/>
            <person name="Cheng H."/>
            <person name="Yao Z."/>
            <person name="He B."/>
            <person name="Chen R."/>
            <person name="Ma D."/>
            <person name="Qiang B."/>
            <person name="Wen Y."/>
            <person name="Hou Y."/>
            <person name="Yu J."/>
        </authorList>
    </citation>
    <scope>NUCLEOTIDE SEQUENCE [LARGE SCALE GENOMIC DNA]</scope>
    <source>
        <strain>301 / Serotype 2a</strain>
    </source>
</reference>
<reference key="2">
    <citation type="journal article" date="2003" name="Infect. Immun.">
        <title>Complete genome sequence and comparative genomics of Shigella flexneri serotype 2a strain 2457T.</title>
        <authorList>
            <person name="Wei J."/>
            <person name="Goldberg M.B."/>
            <person name="Burland V."/>
            <person name="Venkatesan M.M."/>
            <person name="Deng W."/>
            <person name="Fournier G."/>
            <person name="Mayhew G.F."/>
            <person name="Plunkett G. III"/>
            <person name="Rose D.J."/>
            <person name="Darling A."/>
            <person name="Mau B."/>
            <person name="Perna N.T."/>
            <person name="Payne S.M."/>
            <person name="Runyen-Janecky L.J."/>
            <person name="Zhou S."/>
            <person name="Schwartz D.C."/>
            <person name="Blattner F.R."/>
        </authorList>
    </citation>
    <scope>NUCLEOTIDE SEQUENCE [LARGE SCALE GENOMIC DNA]</scope>
    <source>
        <strain>ATCC 700930 / 2457T / Serotype 2a</strain>
    </source>
</reference>